<proteinExistence type="inferred from homology"/>
<organism>
    <name type="scientific">Pseudomonas savastanoi</name>
    <name type="common">Pseudomonas syringae pv. savastanoi</name>
    <dbReference type="NCBI Taxonomy" id="29438"/>
    <lineage>
        <taxon>Bacteria</taxon>
        <taxon>Pseudomonadati</taxon>
        <taxon>Pseudomonadota</taxon>
        <taxon>Gammaproteobacteria</taxon>
        <taxon>Pseudomonadales</taxon>
        <taxon>Pseudomonadaceae</taxon>
        <taxon>Pseudomonas</taxon>
    </lineage>
</organism>
<keyword id="KW-0203">Cytokinin biosynthesis</keyword>
<keyword id="KW-0614">Plasmid</keyword>
<keyword id="KW-0808">Transferase</keyword>
<feature type="chain" id="PRO_0000216439" description="Adenylate dimethylallyltransferase">
    <location>
        <begin position="1"/>
        <end position="234"/>
    </location>
</feature>
<reference key="1">
    <citation type="journal article" date="1986" name="Nucleic Acids Res.">
        <title>Nucleotide sequence and expression of a Pseudomonas savastanoi cytokinin biosynthetic gene: homology with Agrobacterium tumefaciens tmr and tzs loci.</title>
        <authorList>
            <person name="Powell G.K."/>
            <person name="Morris R.O."/>
        </authorList>
    </citation>
    <scope>NUCLEOTIDE SEQUENCE [GENOMIC DNA]</scope>
    <source>
        <strain>1006</strain>
    </source>
</reference>
<name>IPT_PSESS</name>
<evidence type="ECO:0000250" key="1"/>
<evidence type="ECO:0000305" key="2"/>
<dbReference type="EC" id="2.5.1.27"/>
<dbReference type="EMBL" id="X03679">
    <property type="protein sequence ID" value="CAA27315.1"/>
    <property type="molecule type" value="Genomic_DNA"/>
</dbReference>
<dbReference type="PIR" id="A24937">
    <property type="entry name" value="A24937"/>
</dbReference>
<dbReference type="RefSeq" id="WP_031598371.1">
    <property type="nucleotide sequence ID" value="NZ_NIAX01000031.1"/>
</dbReference>
<dbReference type="SMR" id="P06619"/>
<dbReference type="PHI-base" id="PHI:10965"/>
<dbReference type="GO" id="GO:0009824">
    <property type="term" value="F:AMP dimethylallyltransferase activity"/>
    <property type="evidence" value="ECO:0007669"/>
    <property type="project" value="UniProtKB-EC"/>
</dbReference>
<dbReference type="GO" id="GO:0009691">
    <property type="term" value="P:cytokinin biosynthetic process"/>
    <property type="evidence" value="ECO:0007669"/>
    <property type="project" value="UniProtKB-KW"/>
</dbReference>
<dbReference type="Gene3D" id="1.10.287.890">
    <property type="entry name" value="Crystal structure of tRNA isopentenylpyrophosphate transferase (bh2366) domain"/>
    <property type="match status" value="1"/>
</dbReference>
<dbReference type="Gene3D" id="3.40.50.300">
    <property type="entry name" value="P-loop containing nucleotide triphosphate hydrolases"/>
    <property type="match status" value="1"/>
</dbReference>
<dbReference type="InterPro" id="IPR027417">
    <property type="entry name" value="P-loop_NTPase"/>
</dbReference>
<dbReference type="InterPro" id="IPR002648">
    <property type="entry name" value="Tzs"/>
</dbReference>
<dbReference type="Pfam" id="PF01745">
    <property type="entry name" value="IPT"/>
    <property type="match status" value="1"/>
</dbReference>
<dbReference type="PIRSF" id="PIRSF000507">
    <property type="entry name" value="IPT"/>
    <property type="match status" value="1"/>
</dbReference>
<dbReference type="SUPFAM" id="SSF52540">
    <property type="entry name" value="P-loop containing nucleoside triphosphate hydrolases"/>
    <property type="match status" value="1"/>
</dbReference>
<sequence>MKIYLIWGATCTGKTEHSIKLSKSTGWPVIVLDRVQCCFDIATGSGRPHPEELQSTRRIYLDNRRISEGVISAEEANDRLKLEVNKHIDSGGVILEGGSISLLKLISKDPYWCDRFIWSQHRMRLQDTDVFMDKAKARVRRMLVGSTETTGLLDELVAAQSDLNAKLAIQDIDGYRYIMNYAQARRLSITQLLNVMTGDMKEELINGIALEYYEHAKWQERDFPAEWLAERSTR</sequence>
<accession>P06619</accession>
<geneLocation type="plasmid">
    <name>pCK1</name>
</geneLocation>
<protein>
    <recommendedName>
        <fullName>Adenylate dimethylallyltransferase</fullName>
        <ecNumber>2.5.1.27</ecNumber>
    </recommendedName>
    <alternativeName>
        <fullName>Dimethylallyl transferase</fullName>
    </alternativeName>
    <alternativeName>
        <fullName>Isopentenyl transferase</fullName>
    </alternativeName>
    <alternativeName>
        <fullName>Trans-zeatin producing protein</fullName>
    </alternativeName>
</protein>
<gene>
    <name type="primary">ptz</name>
</gene>
<comment type="function">
    <text evidence="1">Transfers dimethylallyl groups to AMP as part of the biosynthesis of cytokinin phytohormones.</text>
</comment>
<comment type="catalytic activity">
    <reaction>
        <text>dimethylallyl diphosphate + AMP = N(6)-(dimethylallyl)adenosine 5'-phosphate + diphosphate</text>
        <dbReference type="Rhea" id="RHEA:15285"/>
        <dbReference type="ChEBI" id="CHEBI:33019"/>
        <dbReference type="ChEBI" id="CHEBI:57526"/>
        <dbReference type="ChEBI" id="CHEBI:57623"/>
        <dbReference type="ChEBI" id="CHEBI:456215"/>
        <dbReference type="EC" id="2.5.1.27"/>
    </reaction>
</comment>
<comment type="similarity">
    <text evidence="2">Belongs to the isopentenyl transferase family.</text>
</comment>